<name>CIPK8_ARATH</name>
<protein>
    <recommendedName>
        <fullName>CBL-interacting serine/threonine-protein kinase 8</fullName>
        <ecNumber>2.7.11.1</ecNumber>
    </recommendedName>
    <alternativeName>
        <fullName>SNF1-related kinase 3.13</fullName>
    </alternativeName>
    <alternativeName>
        <fullName>SOS2-like protein kinase PKS11</fullName>
    </alternativeName>
</protein>
<keyword id="KW-0025">Alternative splicing</keyword>
<keyword id="KW-0067">ATP-binding</keyword>
<keyword id="KW-0418">Kinase</keyword>
<keyword id="KW-0464">Manganese</keyword>
<keyword id="KW-0547">Nucleotide-binding</keyword>
<keyword id="KW-0597">Phosphoprotein</keyword>
<keyword id="KW-1185">Reference proteome</keyword>
<keyword id="KW-0723">Serine/threonine-protein kinase</keyword>
<keyword id="KW-0808">Transferase</keyword>
<feature type="chain" id="PRO_0000337211" description="CBL-interacting serine/threonine-protein kinase 8">
    <location>
        <begin position="1"/>
        <end position="445"/>
    </location>
</feature>
<feature type="domain" description="Protein kinase" evidence="4">
    <location>
        <begin position="9"/>
        <end position="262"/>
    </location>
</feature>
<feature type="domain" description="NAF" evidence="5">
    <location>
        <begin position="302"/>
        <end position="326"/>
    </location>
</feature>
<feature type="region of interest" description="Activation loop" evidence="1">
    <location>
        <begin position="150"/>
        <end position="177"/>
    </location>
</feature>
<feature type="region of interest" description="PPI" evidence="1">
    <location>
        <begin position="333"/>
        <end position="362"/>
    </location>
</feature>
<feature type="active site" description="Proton acceptor" evidence="4 6">
    <location>
        <position position="132"/>
    </location>
</feature>
<feature type="binding site" evidence="4">
    <location>
        <begin position="15"/>
        <end position="23"/>
    </location>
    <ligand>
        <name>ATP</name>
        <dbReference type="ChEBI" id="CHEBI:30616"/>
    </ligand>
</feature>
<feature type="binding site" evidence="4">
    <location>
        <position position="38"/>
    </location>
    <ligand>
        <name>ATP</name>
        <dbReference type="ChEBI" id="CHEBI:30616"/>
    </ligand>
</feature>
<feature type="modified residue" description="Phosphoserine" evidence="3">
    <location>
        <position position="154"/>
    </location>
</feature>
<feature type="modified residue" description="Phosphothreonine" evidence="2">
    <location>
        <position position="166"/>
    </location>
</feature>
<feature type="splice variant" id="VSP_033982" description="In isoform 2." evidence="9">
    <original>VFKVAPSILMVDIQNAAGDAEEY</original>
    <variation>QETQKNTLSSTRLFVVSLMTSFGSRQMH</variation>
    <location>
        <begin position="388"/>
        <end position="410"/>
    </location>
</feature>
<feature type="mutagenesis site" description="Enhanced kinase activity." evidence="7">
    <original>S</original>
    <variation>D</variation>
    <location>
        <position position="154"/>
    </location>
</feature>
<feature type="mutagenesis site" description="Strongly enhanced kinase activity, with an optimum pH of 7-7.5 at 30 degrees Celsius." evidence="7">
    <original>T</original>
    <variation>D</variation>
    <location>
        <position position="162"/>
    </location>
</feature>
<feature type="mutagenesis site" description="Enhanced kinase activity." evidence="7">
    <original>Y</original>
    <variation>D</variation>
    <location>
        <position position="173"/>
    </location>
</feature>
<dbReference type="EC" id="2.7.11.1"/>
<dbReference type="EMBL" id="AF290193">
    <property type="protein sequence ID" value="AAK16683.2"/>
    <property type="molecule type" value="mRNA"/>
</dbReference>
<dbReference type="EMBL" id="AL078637">
    <property type="protein sequence ID" value="CAB45075.1"/>
    <property type="molecule type" value="Genomic_DNA"/>
</dbReference>
<dbReference type="EMBL" id="AL161561">
    <property type="protein sequence ID" value="CAB79350.1"/>
    <property type="molecule type" value="Genomic_DNA"/>
</dbReference>
<dbReference type="EMBL" id="CP002687">
    <property type="protein sequence ID" value="AEE84899.1"/>
    <property type="molecule type" value="Genomic_DNA"/>
</dbReference>
<dbReference type="EMBL" id="BT000958">
    <property type="protein sequence ID" value="AAN41358.1"/>
    <property type="molecule type" value="mRNA"/>
</dbReference>
<dbReference type="PIR" id="T09903">
    <property type="entry name" value="T09903"/>
</dbReference>
<dbReference type="RefSeq" id="NP_194171.1">
    <molecule id="Q9STV4-1"/>
    <property type="nucleotide sequence ID" value="NM_118573.4"/>
</dbReference>
<dbReference type="SMR" id="Q9STV4"/>
<dbReference type="BioGRID" id="13831">
    <property type="interactions" value="9"/>
</dbReference>
<dbReference type="FunCoup" id="Q9STV4">
    <property type="interactions" value="2995"/>
</dbReference>
<dbReference type="IntAct" id="Q9STV4">
    <property type="interactions" value="2"/>
</dbReference>
<dbReference type="STRING" id="3702.Q9STV4"/>
<dbReference type="iPTMnet" id="Q9STV4"/>
<dbReference type="PaxDb" id="3702-AT4G24400.1"/>
<dbReference type="ProteomicsDB" id="246687">
    <molecule id="Q9STV4-1"/>
</dbReference>
<dbReference type="EnsemblPlants" id="AT4G24400.1">
    <molecule id="Q9STV4-1"/>
    <property type="protein sequence ID" value="AT4G24400.1"/>
    <property type="gene ID" value="AT4G24400"/>
</dbReference>
<dbReference type="GeneID" id="828542"/>
<dbReference type="Gramene" id="AT4G24400.1">
    <molecule id="Q9STV4-1"/>
    <property type="protein sequence ID" value="AT4G24400.1"/>
    <property type="gene ID" value="AT4G24400"/>
</dbReference>
<dbReference type="KEGG" id="ath:AT4G24400"/>
<dbReference type="Araport" id="AT4G24400"/>
<dbReference type="TAIR" id="AT4G24400">
    <property type="gene designation" value="CIPK8"/>
</dbReference>
<dbReference type="eggNOG" id="KOG0583">
    <property type="taxonomic scope" value="Eukaryota"/>
</dbReference>
<dbReference type="HOGENOM" id="CLU_000288_59_0_1"/>
<dbReference type="InParanoid" id="Q9STV4"/>
<dbReference type="OrthoDB" id="193931at2759"/>
<dbReference type="PhylomeDB" id="Q9STV4"/>
<dbReference type="PRO" id="PR:Q9STV4"/>
<dbReference type="Proteomes" id="UP000006548">
    <property type="component" value="Chromosome 4"/>
</dbReference>
<dbReference type="ExpressionAtlas" id="Q9STV4">
    <property type="expression patterns" value="baseline and differential"/>
</dbReference>
<dbReference type="GO" id="GO:0005524">
    <property type="term" value="F:ATP binding"/>
    <property type="evidence" value="ECO:0007669"/>
    <property type="project" value="UniProtKB-KW"/>
</dbReference>
<dbReference type="GO" id="GO:0004672">
    <property type="term" value="F:protein kinase activity"/>
    <property type="evidence" value="ECO:0000304"/>
    <property type="project" value="TAIR"/>
</dbReference>
<dbReference type="GO" id="GO:0106310">
    <property type="term" value="F:protein serine kinase activity"/>
    <property type="evidence" value="ECO:0007669"/>
    <property type="project" value="RHEA"/>
</dbReference>
<dbReference type="GO" id="GO:0004674">
    <property type="term" value="F:protein serine/threonine kinase activity"/>
    <property type="evidence" value="ECO:0007005"/>
    <property type="project" value="TAIR"/>
</dbReference>
<dbReference type="GO" id="GO:0046777">
    <property type="term" value="P:protein autophosphorylation"/>
    <property type="evidence" value="ECO:0007005"/>
    <property type="project" value="TAIR"/>
</dbReference>
<dbReference type="GO" id="GO:0006468">
    <property type="term" value="P:protein phosphorylation"/>
    <property type="evidence" value="ECO:0000304"/>
    <property type="project" value="TAIR"/>
</dbReference>
<dbReference type="GO" id="GO:0009749">
    <property type="term" value="P:response to glucose"/>
    <property type="evidence" value="ECO:0000304"/>
    <property type="project" value="TAIR"/>
</dbReference>
<dbReference type="GO" id="GO:0010167">
    <property type="term" value="P:response to nitrate"/>
    <property type="evidence" value="ECO:0000315"/>
    <property type="project" value="TAIR"/>
</dbReference>
<dbReference type="GO" id="GO:0048364">
    <property type="term" value="P:root development"/>
    <property type="evidence" value="ECO:0000315"/>
    <property type="project" value="TAIR"/>
</dbReference>
<dbReference type="GO" id="GO:0007165">
    <property type="term" value="P:signal transduction"/>
    <property type="evidence" value="ECO:0007669"/>
    <property type="project" value="InterPro"/>
</dbReference>
<dbReference type="CDD" id="cd12195">
    <property type="entry name" value="CIPK_C"/>
    <property type="match status" value="1"/>
</dbReference>
<dbReference type="FunFam" id="1.10.510.10:FF:000279">
    <property type="entry name" value="Non-specific serine/threonine protein kinase"/>
    <property type="match status" value="1"/>
</dbReference>
<dbReference type="FunFam" id="3.30.200.20:FF:000096">
    <property type="entry name" value="Non-specific serine/threonine protein kinase"/>
    <property type="match status" value="1"/>
</dbReference>
<dbReference type="FunFam" id="3.30.310.80:FF:000002">
    <property type="entry name" value="Non-specific serine/threonine protein kinase"/>
    <property type="match status" value="1"/>
</dbReference>
<dbReference type="Gene3D" id="3.30.310.80">
    <property type="entry name" value="Kinase associated domain 1, KA1"/>
    <property type="match status" value="1"/>
</dbReference>
<dbReference type="Gene3D" id="1.10.510.10">
    <property type="entry name" value="Transferase(Phosphotransferase) domain 1"/>
    <property type="match status" value="1"/>
</dbReference>
<dbReference type="InterPro" id="IPR011009">
    <property type="entry name" value="Kinase-like_dom_sf"/>
</dbReference>
<dbReference type="InterPro" id="IPR018451">
    <property type="entry name" value="NAF/FISL_domain"/>
</dbReference>
<dbReference type="InterPro" id="IPR004041">
    <property type="entry name" value="NAF_dom"/>
</dbReference>
<dbReference type="InterPro" id="IPR000719">
    <property type="entry name" value="Prot_kinase_dom"/>
</dbReference>
<dbReference type="InterPro" id="IPR017441">
    <property type="entry name" value="Protein_kinase_ATP_BS"/>
</dbReference>
<dbReference type="InterPro" id="IPR008271">
    <property type="entry name" value="Ser/Thr_kinase_AS"/>
</dbReference>
<dbReference type="PANTHER" id="PTHR43895">
    <property type="entry name" value="CALCIUM/CALMODULIN-DEPENDENT PROTEIN KINASE KINASE-RELATED"/>
    <property type="match status" value="1"/>
</dbReference>
<dbReference type="PANTHER" id="PTHR43895:SF114">
    <property type="entry name" value="NON-SPECIFIC SERINE_THREONINE PROTEIN KINASE"/>
    <property type="match status" value="1"/>
</dbReference>
<dbReference type="Pfam" id="PF03822">
    <property type="entry name" value="NAF"/>
    <property type="match status" value="1"/>
</dbReference>
<dbReference type="Pfam" id="PF00069">
    <property type="entry name" value="Pkinase"/>
    <property type="match status" value="1"/>
</dbReference>
<dbReference type="SMART" id="SM00220">
    <property type="entry name" value="S_TKc"/>
    <property type="match status" value="1"/>
</dbReference>
<dbReference type="SUPFAM" id="SSF56112">
    <property type="entry name" value="Protein kinase-like (PK-like)"/>
    <property type="match status" value="1"/>
</dbReference>
<dbReference type="PROSITE" id="PS50816">
    <property type="entry name" value="NAF"/>
    <property type="match status" value="1"/>
</dbReference>
<dbReference type="PROSITE" id="PS00107">
    <property type="entry name" value="PROTEIN_KINASE_ATP"/>
    <property type="match status" value="1"/>
</dbReference>
<dbReference type="PROSITE" id="PS50011">
    <property type="entry name" value="PROTEIN_KINASE_DOM"/>
    <property type="match status" value="1"/>
</dbReference>
<dbReference type="PROSITE" id="PS00108">
    <property type="entry name" value="PROTEIN_KINASE_ST"/>
    <property type="match status" value="1"/>
</dbReference>
<evidence type="ECO:0000250" key="1"/>
<evidence type="ECO:0000250" key="2">
    <source>
        <dbReference type="UniProtKB" id="Q38997"/>
    </source>
</evidence>
<evidence type="ECO:0000250" key="3">
    <source>
        <dbReference type="UniProtKB" id="Q93V58"/>
    </source>
</evidence>
<evidence type="ECO:0000255" key="4">
    <source>
        <dbReference type="PROSITE-ProRule" id="PRU00159"/>
    </source>
</evidence>
<evidence type="ECO:0000255" key="5">
    <source>
        <dbReference type="PROSITE-ProRule" id="PRU00256"/>
    </source>
</evidence>
<evidence type="ECO:0000255" key="6">
    <source>
        <dbReference type="PROSITE-ProRule" id="PRU10027"/>
    </source>
</evidence>
<evidence type="ECO:0000269" key="7">
    <source>
    </source>
</evidence>
<evidence type="ECO:0000269" key="8">
    <source>
    </source>
</evidence>
<evidence type="ECO:0000305" key="9"/>
<organism>
    <name type="scientific">Arabidopsis thaliana</name>
    <name type="common">Mouse-ear cress</name>
    <dbReference type="NCBI Taxonomy" id="3702"/>
    <lineage>
        <taxon>Eukaryota</taxon>
        <taxon>Viridiplantae</taxon>
        <taxon>Streptophyta</taxon>
        <taxon>Embryophyta</taxon>
        <taxon>Tracheophyta</taxon>
        <taxon>Spermatophyta</taxon>
        <taxon>Magnoliopsida</taxon>
        <taxon>eudicotyledons</taxon>
        <taxon>Gunneridae</taxon>
        <taxon>Pentapetalae</taxon>
        <taxon>rosids</taxon>
        <taxon>malvids</taxon>
        <taxon>Brassicales</taxon>
        <taxon>Brassicaceae</taxon>
        <taxon>Camelineae</taxon>
        <taxon>Arabidopsis</taxon>
    </lineage>
</organism>
<gene>
    <name type="primary">CIPK8</name>
    <name type="synonym">PKS11</name>
    <name type="synonym">SnRK3.13</name>
    <name type="ordered locus">At4g24400</name>
    <name type="ORF">T22A6.230</name>
</gene>
<proteinExistence type="evidence at protein level"/>
<comment type="function">
    <text evidence="1">CIPK serine-threonine protein kinases interact with CBL proteins. Binding of a CBL protein to the regulatory NAF domain of CIPK protein lead to the activation of the kinase in a calcium-dependent manner (By similarity).</text>
</comment>
<comment type="catalytic activity">
    <reaction>
        <text>L-seryl-[protein] + ATP = O-phospho-L-seryl-[protein] + ADP + H(+)</text>
        <dbReference type="Rhea" id="RHEA:17989"/>
        <dbReference type="Rhea" id="RHEA-COMP:9863"/>
        <dbReference type="Rhea" id="RHEA-COMP:11604"/>
        <dbReference type="ChEBI" id="CHEBI:15378"/>
        <dbReference type="ChEBI" id="CHEBI:29999"/>
        <dbReference type="ChEBI" id="CHEBI:30616"/>
        <dbReference type="ChEBI" id="CHEBI:83421"/>
        <dbReference type="ChEBI" id="CHEBI:456216"/>
        <dbReference type="EC" id="2.7.11.1"/>
    </reaction>
</comment>
<comment type="catalytic activity">
    <reaction>
        <text>L-threonyl-[protein] + ATP = O-phospho-L-threonyl-[protein] + ADP + H(+)</text>
        <dbReference type="Rhea" id="RHEA:46608"/>
        <dbReference type="Rhea" id="RHEA-COMP:11060"/>
        <dbReference type="Rhea" id="RHEA-COMP:11605"/>
        <dbReference type="ChEBI" id="CHEBI:15378"/>
        <dbReference type="ChEBI" id="CHEBI:30013"/>
        <dbReference type="ChEBI" id="CHEBI:30616"/>
        <dbReference type="ChEBI" id="CHEBI:61977"/>
        <dbReference type="ChEBI" id="CHEBI:456216"/>
        <dbReference type="EC" id="2.7.11.1"/>
    </reaction>
</comment>
<comment type="cofactor">
    <cofactor evidence="1">
        <name>Mn(2+)</name>
        <dbReference type="ChEBI" id="CHEBI:29035"/>
    </cofactor>
</comment>
<comment type="subunit">
    <text evidence="8">Interacts with CBL1 and CBL9.</text>
</comment>
<comment type="interaction">
    <interactant intactId="EBI-2026454">
        <id>Q9STV4</id>
    </interactant>
    <interactant intactId="EBI-974530">
        <id>O81445</id>
        <label>CBL1</label>
    </interactant>
    <organismsDiffer>false</organismsDiffer>
    <experiments>4</experiments>
</comment>
<comment type="interaction">
    <interactant intactId="EBI-2026454">
        <id>Q9STV4</id>
    </interactant>
    <interactant intactId="EBI-637381">
        <id>Q9LTB8</id>
        <label>CBL9</label>
    </interactant>
    <organismsDiffer>false</organismsDiffer>
    <experiments>8</experiments>
</comment>
<comment type="alternative products">
    <event type="alternative splicing"/>
    <isoform>
        <id>Q9STV4-1</id>
        <name>1</name>
        <sequence type="displayed"/>
    </isoform>
    <isoform>
        <id>Q9STV4-2</id>
        <name>2</name>
        <sequence type="described" ref="VSP_033982"/>
    </isoform>
</comment>
<comment type="tissue specificity">
    <text evidence="7">Mostly expressed in roots, and, to a lower extent, in leaves, stems, flowers, and siliques.</text>
</comment>
<comment type="domain">
    <text evidence="1">The activation loop within the kinase domain is the target of phosphorylation/activation by upstream protein kinases. The PPI motif mediates the interaction with the ABI (abscisic acid-insensitive) phosphatases (By similarity).</text>
</comment>
<comment type="similarity">
    <text evidence="9">Belongs to the protein kinase superfamily. CAMK Ser/Thr protein kinase family. SNF1 subfamily.</text>
</comment>
<sequence length="445" mass="50428">MVVRKVGKYELGRTIGEGTFAKVKFAQNTETGESVAMKIVDRSTIIKRKMVDQIKREISIMKLVRHPCVVRLYEVLASRTKIYIILEYITGGELFDKIVRNGRLSESEARKYFHQLIDGVDYCHSKGVYHRDLKPENLLLDSQGNLKISDFGLSALPEQGVTILKTTCGTPNYVAPEVLSHKGYNGAVADIWSCGVILYVLMAGYLPFDEMDLPTLYSKIDKAEFSCPSYFALGAKSLINRILDPNPETRITIAEIRKDEWFLKDYTPVQLIDYEHVNLDDVYAAFDDPEEQTYAQDGTRDTGPLTLNAFDLIILSQGLNLATLFDRGKDSMKHQTRFISHKPANVVLSSMEVVSQSMGFKTHIRNYKMRVEGLSANKTSHFSVILEVFKVAPSILMVDIQNAAGDAEEYLKFYKTFCSKLDDIIWKPPDASMRNRVTKAKSKRR</sequence>
<accession>Q9STV4</accession>
<accession>A8MR95</accession>
<accession>Q9C5S5</accession>
<reference key="1">
    <citation type="journal article" date="2001" name="EMBO J.">
        <title>The NAF domain defines a novel protein-protein interaction module conserved in Ca(2+)-regulated kinases.</title>
        <authorList>
            <person name="Albrecht V."/>
            <person name="Ritz O."/>
            <person name="Linder S."/>
            <person name="Harter K."/>
            <person name="Kudla J."/>
        </authorList>
    </citation>
    <scope>NUCLEOTIDE SEQUENCE [MRNA] (ISOFORM 1)</scope>
</reference>
<reference key="2">
    <citation type="journal article" date="1999" name="Nature">
        <title>Sequence and analysis of chromosome 4 of the plant Arabidopsis thaliana.</title>
        <authorList>
            <person name="Mayer K.F.X."/>
            <person name="Schueller C."/>
            <person name="Wambutt R."/>
            <person name="Murphy G."/>
            <person name="Volckaert G."/>
            <person name="Pohl T."/>
            <person name="Duesterhoeft A."/>
            <person name="Stiekema W."/>
            <person name="Entian K.-D."/>
            <person name="Terryn N."/>
            <person name="Harris B."/>
            <person name="Ansorge W."/>
            <person name="Brandt P."/>
            <person name="Grivell L.A."/>
            <person name="Rieger M."/>
            <person name="Weichselgartner M."/>
            <person name="de Simone V."/>
            <person name="Obermaier B."/>
            <person name="Mache R."/>
            <person name="Mueller M."/>
            <person name="Kreis M."/>
            <person name="Delseny M."/>
            <person name="Puigdomenech P."/>
            <person name="Watson M."/>
            <person name="Schmidtheini T."/>
            <person name="Reichert B."/>
            <person name="Portetelle D."/>
            <person name="Perez-Alonso M."/>
            <person name="Boutry M."/>
            <person name="Bancroft I."/>
            <person name="Vos P."/>
            <person name="Hoheisel J."/>
            <person name="Zimmermann W."/>
            <person name="Wedler H."/>
            <person name="Ridley P."/>
            <person name="Langham S.-A."/>
            <person name="McCullagh B."/>
            <person name="Bilham L."/>
            <person name="Robben J."/>
            <person name="van der Schueren J."/>
            <person name="Grymonprez B."/>
            <person name="Chuang Y.-J."/>
            <person name="Vandenbussche F."/>
            <person name="Braeken M."/>
            <person name="Weltjens I."/>
            <person name="Voet M."/>
            <person name="Bastiaens I."/>
            <person name="Aert R."/>
            <person name="Defoor E."/>
            <person name="Weitzenegger T."/>
            <person name="Bothe G."/>
            <person name="Ramsperger U."/>
            <person name="Hilbert H."/>
            <person name="Braun M."/>
            <person name="Holzer E."/>
            <person name="Brandt A."/>
            <person name="Peters S."/>
            <person name="van Staveren M."/>
            <person name="Dirkse W."/>
            <person name="Mooijman P."/>
            <person name="Klein Lankhorst R."/>
            <person name="Rose M."/>
            <person name="Hauf J."/>
            <person name="Koetter P."/>
            <person name="Berneiser S."/>
            <person name="Hempel S."/>
            <person name="Feldpausch M."/>
            <person name="Lamberth S."/>
            <person name="Van den Daele H."/>
            <person name="De Keyser A."/>
            <person name="Buysshaert C."/>
            <person name="Gielen J."/>
            <person name="Villarroel R."/>
            <person name="De Clercq R."/>
            <person name="van Montagu M."/>
            <person name="Rogers J."/>
            <person name="Cronin A."/>
            <person name="Quail M.A."/>
            <person name="Bray-Allen S."/>
            <person name="Clark L."/>
            <person name="Doggett J."/>
            <person name="Hall S."/>
            <person name="Kay M."/>
            <person name="Lennard N."/>
            <person name="McLay K."/>
            <person name="Mayes R."/>
            <person name="Pettett A."/>
            <person name="Rajandream M.A."/>
            <person name="Lyne M."/>
            <person name="Benes V."/>
            <person name="Rechmann S."/>
            <person name="Borkova D."/>
            <person name="Bloecker H."/>
            <person name="Scharfe M."/>
            <person name="Grimm M."/>
            <person name="Loehnert T.-H."/>
            <person name="Dose S."/>
            <person name="de Haan M."/>
            <person name="Maarse A.C."/>
            <person name="Schaefer M."/>
            <person name="Mueller-Auer S."/>
            <person name="Gabel C."/>
            <person name="Fuchs M."/>
            <person name="Fartmann B."/>
            <person name="Granderath K."/>
            <person name="Dauner D."/>
            <person name="Herzl A."/>
            <person name="Neumann S."/>
            <person name="Argiriou A."/>
            <person name="Vitale D."/>
            <person name="Liguori R."/>
            <person name="Piravandi E."/>
            <person name="Massenet O."/>
            <person name="Quigley F."/>
            <person name="Clabauld G."/>
            <person name="Muendlein A."/>
            <person name="Felber R."/>
            <person name="Schnabl S."/>
            <person name="Hiller R."/>
            <person name="Schmidt W."/>
            <person name="Lecharny A."/>
            <person name="Aubourg S."/>
            <person name="Chefdor F."/>
            <person name="Cooke R."/>
            <person name="Berger C."/>
            <person name="Monfort A."/>
            <person name="Casacuberta E."/>
            <person name="Gibbons T."/>
            <person name="Weber N."/>
            <person name="Vandenbol M."/>
            <person name="Bargues M."/>
            <person name="Terol J."/>
            <person name="Torres A."/>
            <person name="Perez-Perez A."/>
            <person name="Purnelle B."/>
            <person name="Bent E."/>
            <person name="Johnson S."/>
            <person name="Tacon D."/>
            <person name="Jesse T."/>
            <person name="Heijnen L."/>
            <person name="Schwarz S."/>
            <person name="Scholler P."/>
            <person name="Heber S."/>
            <person name="Francs P."/>
            <person name="Bielke C."/>
            <person name="Frishman D."/>
            <person name="Haase D."/>
            <person name="Lemcke K."/>
            <person name="Mewes H.-W."/>
            <person name="Stocker S."/>
            <person name="Zaccaria P."/>
            <person name="Bevan M."/>
            <person name="Wilson R.K."/>
            <person name="de la Bastide M."/>
            <person name="Habermann K."/>
            <person name="Parnell L."/>
            <person name="Dedhia N."/>
            <person name="Gnoj L."/>
            <person name="Schutz K."/>
            <person name="Huang E."/>
            <person name="Spiegel L."/>
            <person name="Sekhon M."/>
            <person name="Murray J."/>
            <person name="Sheet P."/>
            <person name="Cordes M."/>
            <person name="Abu-Threideh J."/>
            <person name="Stoneking T."/>
            <person name="Kalicki J."/>
            <person name="Graves T."/>
            <person name="Harmon G."/>
            <person name="Edwards J."/>
            <person name="Latreille P."/>
            <person name="Courtney L."/>
            <person name="Cloud J."/>
            <person name="Abbott A."/>
            <person name="Scott K."/>
            <person name="Johnson D."/>
            <person name="Minx P."/>
            <person name="Bentley D."/>
            <person name="Fulton B."/>
            <person name="Miller N."/>
            <person name="Greco T."/>
            <person name="Kemp K."/>
            <person name="Kramer J."/>
            <person name="Fulton L."/>
            <person name="Mardis E."/>
            <person name="Dante M."/>
            <person name="Pepin K."/>
            <person name="Hillier L.W."/>
            <person name="Nelson J."/>
            <person name="Spieth J."/>
            <person name="Ryan E."/>
            <person name="Andrews S."/>
            <person name="Geisel C."/>
            <person name="Layman D."/>
            <person name="Du H."/>
            <person name="Ali J."/>
            <person name="Berghoff A."/>
            <person name="Jones K."/>
            <person name="Drone K."/>
            <person name="Cotton M."/>
            <person name="Joshu C."/>
            <person name="Antonoiu B."/>
            <person name="Zidanic M."/>
            <person name="Strong C."/>
            <person name="Sun H."/>
            <person name="Lamar B."/>
            <person name="Yordan C."/>
            <person name="Ma P."/>
            <person name="Zhong J."/>
            <person name="Preston R."/>
            <person name="Vil D."/>
            <person name="Shekher M."/>
            <person name="Matero A."/>
            <person name="Shah R."/>
            <person name="Swaby I.K."/>
            <person name="O'Shaughnessy A."/>
            <person name="Rodriguez M."/>
            <person name="Hoffman J."/>
            <person name="Till S."/>
            <person name="Granat S."/>
            <person name="Shohdy N."/>
            <person name="Hasegawa A."/>
            <person name="Hameed A."/>
            <person name="Lodhi M."/>
            <person name="Johnson A."/>
            <person name="Chen E."/>
            <person name="Marra M.A."/>
            <person name="Martienssen R."/>
            <person name="McCombie W.R."/>
        </authorList>
    </citation>
    <scope>NUCLEOTIDE SEQUENCE [LARGE SCALE GENOMIC DNA]</scope>
    <source>
        <strain>cv. Columbia</strain>
    </source>
</reference>
<reference key="3">
    <citation type="journal article" date="2017" name="Plant J.">
        <title>Araport11: a complete reannotation of the Arabidopsis thaliana reference genome.</title>
        <authorList>
            <person name="Cheng C.Y."/>
            <person name="Krishnakumar V."/>
            <person name="Chan A.P."/>
            <person name="Thibaud-Nissen F."/>
            <person name="Schobel S."/>
            <person name="Town C.D."/>
        </authorList>
    </citation>
    <scope>GENOME REANNOTATION</scope>
    <source>
        <strain>cv. Columbia</strain>
    </source>
</reference>
<reference key="4">
    <citation type="journal article" date="2003" name="Science">
        <title>Empirical analysis of transcriptional activity in the Arabidopsis genome.</title>
        <authorList>
            <person name="Yamada K."/>
            <person name="Lim J."/>
            <person name="Dale J.M."/>
            <person name="Chen H."/>
            <person name="Shinn P."/>
            <person name="Palm C.J."/>
            <person name="Southwick A.M."/>
            <person name="Wu H.C."/>
            <person name="Kim C.J."/>
            <person name="Nguyen M."/>
            <person name="Pham P.K."/>
            <person name="Cheuk R.F."/>
            <person name="Karlin-Newmann G."/>
            <person name="Liu S.X."/>
            <person name="Lam B."/>
            <person name="Sakano H."/>
            <person name="Wu T."/>
            <person name="Yu G."/>
            <person name="Miranda M."/>
            <person name="Quach H.L."/>
            <person name="Tripp M."/>
            <person name="Chang C.H."/>
            <person name="Lee J.M."/>
            <person name="Toriumi M.J."/>
            <person name="Chan M.M."/>
            <person name="Tang C.C."/>
            <person name="Onodera C.S."/>
            <person name="Deng J.M."/>
            <person name="Akiyama K."/>
            <person name="Ansari Y."/>
            <person name="Arakawa T."/>
            <person name="Banh J."/>
            <person name="Banno F."/>
            <person name="Bowser L."/>
            <person name="Brooks S.Y."/>
            <person name="Carninci P."/>
            <person name="Chao Q."/>
            <person name="Choy N."/>
            <person name="Enju A."/>
            <person name="Goldsmith A.D."/>
            <person name="Gurjal M."/>
            <person name="Hansen N.F."/>
            <person name="Hayashizaki Y."/>
            <person name="Johnson-Hopson C."/>
            <person name="Hsuan V.W."/>
            <person name="Iida K."/>
            <person name="Karnes M."/>
            <person name="Khan S."/>
            <person name="Koesema E."/>
            <person name="Ishida J."/>
            <person name="Jiang P.X."/>
            <person name="Jones T."/>
            <person name="Kawai J."/>
            <person name="Kamiya A."/>
            <person name="Meyers C."/>
            <person name="Nakajima M."/>
            <person name="Narusaka M."/>
            <person name="Seki M."/>
            <person name="Sakurai T."/>
            <person name="Satou M."/>
            <person name="Tamse R."/>
            <person name="Vaysberg M."/>
            <person name="Wallender E.K."/>
            <person name="Wong C."/>
            <person name="Yamamura Y."/>
            <person name="Yuan S."/>
            <person name="Shinozaki K."/>
            <person name="Davis R.W."/>
            <person name="Theologis A."/>
            <person name="Ecker J.R."/>
        </authorList>
    </citation>
    <scope>NUCLEOTIDE SEQUENCE [LARGE SCALE MRNA] (ISOFORM 1)</scope>
    <source>
        <strain>cv. Columbia</strain>
    </source>
</reference>
<reference key="5">
    <citation type="journal article" date="2002" name="J. Biol. Chem.">
        <title>Biochemical and functional characterization of PKS11, a novel Arabidopsis protein kinase.</title>
        <authorList>
            <person name="Gong D."/>
            <person name="Gong Z."/>
            <person name="Guo Y."/>
            <person name="Chen X."/>
            <person name="Zhu J.-K."/>
        </authorList>
    </citation>
    <scope>MUTAGENESIS OF SER-154; THR-162 AND TYR-173</scope>
    <scope>TISSUE SPECIFICITY</scope>
</reference>
<reference key="6">
    <citation type="journal article" date="2003" name="Plant Physiol.">
        <title>The Arabidopsis CDPK-SnRK superfamily of protein kinases.</title>
        <authorList>
            <person name="Hrabak E.M."/>
            <person name="Chan C.W.M."/>
            <person name="Gribskov M."/>
            <person name="Harper J.F."/>
            <person name="Choi J.H."/>
            <person name="Halford N."/>
            <person name="Kudla J."/>
            <person name="Luan S."/>
            <person name="Nimmo H.G."/>
            <person name="Sussman M.R."/>
            <person name="Thomas M."/>
            <person name="Walker-Simmons K."/>
            <person name="Zhu J.-K."/>
            <person name="Harmon A.C."/>
        </authorList>
    </citation>
    <scope>GENE FAMILY</scope>
    <scope>NOMENCLATURE</scope>
</reference>
<reference key="7">
    <citation type="journal article" date="2004" name="Plant Physiol.">
        <title>Calcium sensors and their interacting protein kinases: genomics of the Arabidopsis and rice CBL-CIPK signaling networks.</title>
        <authorList>
            <person name="Kolukisaoglu U."/>
            <person name="Weinl S."/>
            <person name="Blazevic D."/>
            <person name="Batistic O."/>
            <person name="Kudla J."/>
        </authorList>
    </citation>
    <scope>INTERACTION WITH CBL1 AND CBL9</scope>
</reference>